<proteinExistence type="evidence at protein level"/>
<keyword id="KW-0009">Actin-binding</keyword>
<keyword id="KW-1003">Cell membrane</keyword>
<keyword id="KW-0966">Cell projection</keyword>
<keyword id="KW-0963">Cytoplasm</keyword>
<keyword id="KW-0206">Cytoskeleton</keyword>
<keyword id="KW-0472">Membrane</keyword>
<keyword id="KW-0597">Phosphoprotein</keyword>
<keyword id="KW-1185">Reference proteome</keyword>
<keyword id="KW-0677">Repeat</keyword>
<name>COBL_RAT</name>
<accession>D3ZUI5</accession>
<gene>
    <name type="primary">Cobl</name>
</gene>
<organism>
    <name type="scientific">Rattus norvegicus</name>
    <name type="common">Rat</name>
    <dbReference type="NCBI Taxonomy" id="10116"/>
    <lineage>
        <taxon>Eukaryota</taxon>
        <taxon>Metazoa</taxon>
        <taxon>Chordata</taxon>
        <taxon>Craniata</taxon>
        <taxon>Vertebrata</taxon>
        <taxon>Euteleostomi</taxon>
        <taxon>Mammalia</taxon>
        <taxon>Eutheria</taxon>
        <taxon>Euarchontoglires</taxon>
        <taxon>Glires</taxon>
        <taxon>Rodentia</taxon>
        <taxon>Myomorpha</taxon>
        <taxon>Muroidea</taxon>
        <taxon>Muridae</taxon>
        <taxon>Murinae</taxon>
        <taxon>Rattus</taxon>
    </lineage>
</organism>
<protein>
    <recommendedName>
        <fullName>Protein cordon-bleu</fullName>
    </recommendedName>
</protein>
<reference key="1">
    <citation type="journal article" date="2004" name="Nature">
        <title>Genome sequence of the Brown Norway rat yields insights into mammalian evolution.</title>
        <authorList>
            <person name="Gibbs R.A."/>
            <person name="Weinstock G.M."/>
            <person name="Metzker M.L."/>
            <person name="Muzny D.M."/>
            <person name="Sodergren E.J."/>
            <person name="Scherer S."/>
            <person name="Scott G."/>
            <person name="Steffen D."/>
            <person name="Worley K.C."/>
            <person name="Burch P.E."/>
            <person name="Okwuonu G."/>
            <person name="Hines S."/>
            <person name="Lewis L."/>
            <person name="Deramo C."/>
            <person name="Delgado O."/>
            <person name="Dugan-Rocha S."/>
            <person name="Miner G."/>
            <person name="Morgan M."/>
            <person name="Hawes A."/>
            <person name="Gill R."/>
            <person name="Holt R.A."/>
            <person name="Adams M.D."/>
            <person name="Amanatides P.G."/>
            <person name="Baden-Tillson H."/>
            <person name="Barnstead M."/>
            <person name="Chin S."/>
            <person name="Evans C.A."/>
            <person name="Ferriera S."/>
            <person name="Fosler C."/>
            <person name="Glodek A."/>
            <person name="Gu Z."/>
            <person name="Jennings D."/>
            <person name="Kraft C.L."/>
            <person name="Nguyen T."/>
            <person name="Pfannkoch C.M."/>
            <person name="Sitter C."/>
            <person name="Sutton G.G."/>
            <person name="Venter J.C."/>
            <person name="Woodage T."/>
            <person name="Smith D."/>
            <person name="Lee H.-M."/>
            <person name="Gustafson E."/>
            <person name="Cahill P."/>
            <person name="Kana A."/>
            <person name="Doucette-Stamm L."/>
            <person name="Weinstock K."/>
            <person name="Fechtel K."/>
            <person name="Weiss R.B."/>
            <person name="Dunn D.M."/>
            <person name="Green E.D."/>
            <person name="Blakesley R.W."/>
            <person name="Bouffard G.G."/>
            <person name="De Jong P.J."/>
            <person name="Osoegawa K."/>
            <person name="Zhu B."/>
            <person name="Marra M."/>
            <person name="Schein J."/>
            <person name="Bosdet I."/>
            <person name="Fjell C."/>
            <person name="Jones S."/>
            <person name="Krzywinski M."/>
            <person name="Mathewson C."/>
            <person name="Siddiqui A."/>
            <person name="Wye N."/>
            <person name="McPherson J."/>
            <person name="Zhao S."/>
            <person name="Fraser C.M."/>
            <person name="Shetty J."/>
            <person name="Shatsman S."/>
            <person name="Geer K."/>
            <person name="Chen Y."/>
            <person name="Abramzon S."/>
            <person name="Nierman W.C."/>
            <person name="Havlak P.H."/>
            <person name="Chen R."/>
            <person name="Durbin K.J."/>
            <person name="Egan A."/>
            <person name="Ren Y."/>
            <person name="Song X.-Z."/>
            <person name="Li B."/>
            <person name="Liu Y."/>
            <person name="Qin X."/>
            <person name="Cawley S."/>
            <person name="Cooney A.J."/>
            <person name="D'Souza L.M."/>
            <person name="Martin K."/>
            <person name="Wu J.Q."/>
            <person name="Gonzalez-Garay M.L."/>
            <person name="Jackson A.R."/>
            <person name="Kalafus K.J."/>
            <person name="McLeod M.P."/>
            <person name="Milosavljevic A."/>
            <person name="Virk D."/>
            <person name="Volkov A."/>
            <person name="Wheeler D.A."/>
            <person name="Zhang Z."/>
            <person name="Bailey J.A."/>
            <person name="Eichler E.E."/>
            <person name="Tuzun E."/>
            <person name="Birney E."/>
            <person name="Mongin E."/>
            <person name="Ureta-Vidal A."/>
            <person name="Woodwark C."/>
            <person name="Zdobnov E."/>
            <person name="Bork P."/>
            <person name="Suyama M."/>
            <person name="Torrents D."/>
            <person name="Alexandersson M."/>
            <person name="Trask B.J."/>
            <person name="Young J.M."/>
            <person name="Huang H."/>
            <person name="Wang H."/>
            <person name="Xing H."/>
            <person name="Daniels S."/>
            <person name="Gietzen D."/>
            <person name="Schmidt J."/>
            <person name="Stevens K."/>
            <person name="Vitt U."/>
            <person name="Wingrove J."/>
            <person name="Camara F."/>
            <person name="Mar Alba M."/>
            <person name="Abril J.F."/>
            <person name="Guigo R."/>
            <person name="Smit A."/>
            <person name="Dubchak I."/>
            <person name="Rubin E.M."/>
            <person name="Couronne O."/>
            <person name="Poliakov A."/>
            <person name="Huebner N."/>
            <person name="Ganten D."/>
            <person name="Goesele C."/>
            <person name="Hummel O."/>
            <person name="Kreitler T."/>
            <person name="Lee Y.-A."/>
            <person name="Monti J."/>
            <person name="Schulz H."/>
            <person name="Zimdahl H."/>
            <person name="Himmelbauer H."/>
            <person name="Lehrach H."/>
            <person name="Jacob H.J."/>
            <person name="Bromberg S."/>
            <person name="Gullings-Handley J."/>
            <person name="Jensen-Seaman M.I."/>
            <person name="Kwitek A.E."/>
            <person name="Lazar J."/>
            <person name="Pasko D."/>
            <person name="Tonellato P.J."/>
            <person name="Twigger S."/>
            <person name="Ponting C.P."/>
            <person name="Duarte J.M."/>
            <person name="Rice S."/>
            <person name="Goodstadt L."/>
            <person name="Beatson S.A."/>
            <person name="Emes R.D."/>
            <person name="Winter E.E."/>
            <person name="Webber C."/>
            <person name="Brandt P."/>
            <person name="Nyakatura G."/>
            <person name="Adetobi M."/>
            <person name="Chiaromonte F."/>
            <person name="Elnitski L."/>
            <person name="Eswara P."/>
            <person name="Hardison R.C."/>
            <person name="Hou M."/>
            <person name="Kolbe D."/>
            <person name="Makova K."/>
            <person name="Miller W."/>
            <person name="Nekrutenko A."/>
            <person name="Riemer C."/>
            <person name="Schwartz S."/>
            <person name="Taylor J."/>
            <person name="Yang S."/>
            <person name="Zhang Y."/>
            <person name="Lindpaintner K."/>
            <person name="Andrews T.D."/>
            <person name="Caccamo M."/>
            <person name="Clamp M."/>
            <person name="Clarke L."/>
            <person name="Curwen V."/>
            <person name="Durbin R.M."/>
            <person name="Eyras E."/>
            <person name="Searle S.M."/>
            <person name="Cooper G.M."/>
            <person name="Batzoglou S."/>
            <person name="Brudno M."/>
            <person name="Sidow A."/>
            <person name="Stone E.A."/>
            <person name="Payseur B.A."/>
            <person name="Bourque G."/>
            <person name="Lopez-Otin C."/>
            <person name="Puente X.S."/>
            <person name="Chakrabarti K."/>
            <person name="Chatterji S."/>
            <person name="Dewey C."/>
            <person name="Pachter L."/>
            <person name="Bray N."/>
            <person name="Yap V.B."/>
            <person name="Caspi A."/>
            <person name="Tesler G."/>
            <person name="Pevzner P.A."/>
            <person name="Haussler D."/>
            <person name="Roskin K.M."/>
            <person name="Baertsch R."/>
            <person name="Clawson H."/>
            <person name="Furey T.S."/>
            <person name="Hinrichs A.S."/>
            <person name="Karolchik D."/>
            <person name="Kent W.J."/>
            <person name="Rosenbloom K.R."/>
            <person name="Trumbower H."/>
            <person name="Weirauch M."/>
            <person name="Cooper D.N."/>
            <person name="Stenson P.D."/>
            <person name="Ma B."/>
            <person name="Brent M."/>
            <person name="Arumugam M."/>
            <person name="Shteynberg D."/>
            <person name="Copley R.R."/>
            <person name="Taylor M.S."/>
            <person name="Riethman H."/>
            <person name="Mudunuri U."/>
            <person name="Peterson J."/>
            <person name="Guyer M."/>
            <person name="Felsenfeld A."/>
            <person name="Old S."/>
            <person name="Mockrin S."/>
            <person name="Collins F.S."/>
        </authorList>
    </citation>
    <scope>NUCLEOTIDE SEQUENCE [LARGE SCALE GENOMIC DNA]</scope>
    <source>
        <strain>Brown Norway</strain>
    </source>
</reference>
<reference key="2">
    <citation type="submission" date="2005-07" db="EMBL/GenBank/DDBJ databases">
        <authorList>
            <person name="Mural R.J."/>
            <person name="Adams M.D."/>
            <person name="Myers E.W."/>
            <person name="Smith H.O."/>
            <person name="Venter J.C."/>
        </authorList>
    </citation>
    <scope>NUCLEOTIDE SEQUENCE [LARGE SCALE GENOMIC DNA]</scope>
    <source>
        <strain>Brown Norway</strain>
    </source>
</reference>
<reference key="3">
    <citation type="journal article" date="2011" name="EMBO J.">
        <title>The functions of the actin nucleator Cobl in cellular morphogenesis critically depend on syndapin I.</title>
        <authorList>
            <person name="Schwintzer L."/>
            <person name="Koch N."/>
            <person name="Ahuja R."/>
            <person name="Grimm J."/>
            <person name="Kessels M.M."/>
            <person name="Qualmann B."/>
        </authorList>
    </citation>
    <scope>FUNCTION</scope>
    <scope>SUBCELLULAR LOCATION</scope>
    <scope>IDENTIFICATION IN A COMPLEX WITH PACSIN1 AND WASL</scope>
    <scope>INTERACTION WITH PACSIN1; PACSIN2 AND PACSIN3</scope>
</reference>
<reference key="4">
    <citation type="journal article" date="2012" name="J. Neurosci.">
        <title>The actin nucleator Cobl is crucial for Purkinje cell development and works in close conjunction with the F-actin binding protein Abp1.</title>
        <authorList>
            <person name="Haag N."/>
            <person name="Schwintzer L."/>
            <person name="Ahuja R."/>
            <person name="Koch N."/>
            <person name="Grimm J."/>
            <person name="Heuer H."/>
            <person name="Qualmann B."/>
            <person name="Kessels M.M."/>
        </authorList>
    </citation>
    <scope>FUNCTION</scope>
    <scope>INTERACTION WITH DBNL</scope>
    <scope>SUBCELLULAR LOCATION</scope>
    <scope>TISSUE SPECIFICITY</scope>
</reference>
<reference key="5">
    <citation type="journal article" date="2012" name="Nat. Commun.">
        <title>Quantitative maps of protein phosphorylation sites across 14 different rat organs and tissues.</title>
        <authorList>
            <person name="Lundby A."/>
            <person name="Secher A."/>
            <person name="Lage K."/>
            <person name="Nordsborg N.B."/>
            <person name="Dmytriyev A."/>
            <person name="Lundby C."/>
            <person name="Olsen J.V."/>
        </authorList>
    </citation>
    <scope>PHOSPHORYLATION [LARGE SCALE ANALYSIS] AT SER-31; SER-34; SER-196; SER-219; SER-256; SER-330; SER-333 AND SER-356</scope>
    <scope>IDENTIFICATION BY MASS SPECTROMETRY [LARGE SCALE ANALYSIS]</scope>
</reference>
<comment type="function">
    <text evidence="1 6 7">Plays an important role in the reorganization of the actin cytoskeleton. Binds to and sequesters actin monomers (G actin). Nucleates actin polymerization by assembling three actin monomers in cross-filament orientation and thereby promotes growth of actin filaments at the barbed end. Can also mediate actin depolymerization at barbed ends and severing of actin filaments. Promotes formation of cell ruffles. Regulates dendrite branching in Purkinje cells (By similarity). Regulates neuron morphogenesis and increases branching of axons and dendrites.</text>
</comment>
<comment type="subunit">
    <text evidence="1 6 7">Identified in a complex composed of ACTA1, COBL, GSN AND TMSB4X (By similarity). Identified in a complex composed of COBL, PACSIN1 and WASL. Interacts with PACSIN1, PACSIN2 and PACSIN3. Interacts (via WH2 domains) with actin monomers. Interacts with both PACSIN1 and DBNL.</text>
</comment>
<comment type="interaction">
    <interactant intactId="EBI-7003590">
        <id>D3ZUI5</id>
    </interactant>
    <interactant intactId="EBI-397530">
        <id>P62161</id>
        <label>Calm3</label>
    </interactant>
    <organismsDiffer>false</organismsDiffer>
    <experiments>2</experiments>
</comment>
<comment type="interaction">
    <interactant intactId="EBI-7003590">
        <id>D3ZUI5</id>
    </interactant>
    <interactant intactId="EBI-1550185">
        <id>Q9Z0W5</id>
        <label>Pacsin1</label>
    </interactant>
    <organismsDiffer>false</organismsDiffer>
    <experiments>6</experiments>
</comment>
<comment type="subcellular location">
    <subcellularLocation>
        <location>Cell membrane</location>
        <topology>Peripheral membrane protein</topology>
        <orientation>Cytoplasmic side</orientation>
    </subcellularLocation>
    <subcellularLocation>
        <location>Cytoplasm</location>
        <location>Cytoskeleton</location>
    </subcellularLocation>
    <subcellularLocation>
        <location>Cell projection</location>
        <location>Ruffle</location>
    </subcellularLocation>
    <subcellularLocation>
        <location>Cytoplasm</location>
    </subcellularLocation>
    <subcellularLocation>
        <location>Cytoplasm</location>
        <location>Cytosol</location>
    </subcellularLocation>
    <text>Recruited to the cell membrane via interaction with PACSIN1. Colocalizes with the actin cytoskeleton. Detected throughout the neuron cell body, as well as in axons and dendrites.</text>
</comment>
<comment type="tissue specificity">
    <text evidence="7">Detected in brain (at protein level).</text>
</comment>
<evidence type="ECO:0000250" key="1"/>
<evidence type="ECO:0000250" key="2">
    <source>
        <dbReference type="UniProtKB" id="O75128"/>
    </source>
</evidence>
<evidence type="ECO:0000250" key="3">
    <source>
        <dbReference type="UniProtKB" id="Q5NBX1"/>
    </source>
</evidence>
<evidence type="ECO:0000255" key="4">
    <source>
        <dbReference type="PROSITE-ProRule" id="PRU00406"/>
    </source>
</evidence>
<evidence type="ECO:0000256" key="5">
    <source>
        <dbReference type="SAM" id="MobiDB-lite"/>
    </source>
</evidence>
<evidence type="ECO:0000269" key="6">
    <source>
    </source>
</evidence>
<evidence type="ECO:0000269" key="7">
    <source>
    </source>
</evidence>
<evidence type="ECO:0007744" key="8">
    <source>
    </source>
</evidence>
<dbReference type="EMBL" id="CH474055">
    <property type="protein sequence ID" value="EDL76073.1"/>
    <property type="molecule type" value="Genomic_DNA"/>
</dbReference>
<dbReference type="RefSeq" id="NP_001100706.1">
    <property type="nucleotide sequence ID" value="NM_001107236.1"/>
</dbReference>
<dbReference type="SMR" id="D3ZUI5"/>
<dbReference type="CORUM" id="D3ZUI5"/>
<dbReference type="DIP" id="DIP-61709N"/>
<dbReference type="FunCoup" id="D3ZUI5">
    <property type="interactions" value="1095"/>
</dbReference>
<dbReference type="IntAct" id="D3ZUI5">
    <property type="interactions" value="3"/>
</dbReference>
<dbReference type="MINT" id="D3ZUI5"/>
<dbReference type="STRING" id="10116.ENSRNOP00000072330"/>
<dbReference type="GlyGen" id="D3ZUI5">
    <property type="glycosylation" value="1 site"/>
</dbReference>
<dbReference type="iPTMnet" id="D3ZUI5"/>
<dbReference type="PhosphoSitePlus" id="D3ZUI5"/>
<dbReference type="PaxDb" id="10116-ENSRNOP00000063258"/>
<dbReference type="PeptideAtlas" id="D3ZUI5"/>
<dbReference type="Ensembl" id="ENSRNOT00000064483.2">
    <property type="protein sequence ID" value="ENSRNOP00000063258.1"/>
    <property type="gene ID" value="ENSRNOG00000004281.8"/>
</dbReference>
<dbReference type="AGR" id="RGD:1312002"/>
<dbReference type="RGD" id="1312002">
    <property type="gene designation" value="Cobl"/>
</dbReference>
<dbReference type="eggNOG" id="ENOG502QTAY">
    <property type="taxonomic scope" value="Eukaryota"/>
</dbReference>
<dbReference type="GeneTree" id="ENSGT00530000063608"/>
<dbReference type="InParanoid" id="D3ZUI5"/>
<dbReference type="PhylomeDB" id="D3ZUI5"/>
<dbReference type="PRO" id="PR:D3ZUI5"/>
<dbReference type="Proteomes" id="UP000002494">
    <property type="component" value="Chromosome 14"/>
</dbReference>
<dbReference type="Proteomes" id="UP000234681">
    <property type="component" value="Chromosome 14"/>
</dbReference>
<dbReference type="Bgee" id="ENSRNOG00000004281">
    <property type="expression patterns" value="Expressed in frontal cortex and 18 other cell types or tissues"/>
</dbReference>
<dbReference type="ExpressionAtlas" id="D3ZUI5">
    <property type="expression patterns" value="baseline and differential"/>
</dbReference>
<dbReference type="GO" id="GO:0005884">
    <property type="term" value="C:actin filament"/>
    <property type="evidence" value="ECO:0000266"/>
    <property type="project" value="RGD"/>
</dbReference>
<dbReference type="GO" id="GO:0030424">
    <property type="term" value="C:axon"/>
    <property type="evidence" value="ECO:0000266"/>
    <property type="project" value="RGD"/>
</dbReference>
<dbReference type="GO" id="GO:0044295">
    <property type="term" value="C:axonal growth cone"/>
    <property type="evidence" value="ECO:0000266"/>
    <property type="project" value="RGD"/>
</dbReference>
<dbReference type="GO" id="GO:0005938">
    <property type="term" value="C:cell cortex"/>
    <property type="evidence" value="ECO:0000314"/>
    <property type="project" value="BHF-UCL"/>
</dbReference>
<dbReference type="GO" id="GO:0005829">
    <property type="term" value="C:cytosol"/>
    <property type="evidence" value="ECO:0007669"/>
    <property type="project" value="UniProtKB-SubCell"/>
</dbReference>
<dbReference type="GO" id="GO:0030425">
    <property type="term" value="C:dendrite"/>
    <property type="evidence" value="ECO:0000266"/>
    <property type="project" value="RGD"/>
</dbReference>
<dbReference type="GO" id="GO:0044294">
    <property type="term" value="C:dendritic growth cone"/>
    <property type="evidence" value="ECO:0000266"/>
    <property type="project" value="RGD"/>
</dbReference>
<dbReference type="GO" id="GO:0016020">
    <property type="term" value="C:membrane"/>
    <property type="evidence" value="ECO:0000266"/>
    <property type="project" value="RGD"/>
</dbReference>
<dbReference type="GO" id="GO:0043025">
    <property type="term" value="C:neuronal cell body"/>
    <property type="evidence" value="ECO:0000266"/>
    <property type="project" value="RGD"/>
</dbReference>
<dbReference type="GO" id="GO:0048471">
    <property type="term" value="C:perinuclear region of cytoplasm"/>
    <property type="evidence" value="ECO:0000266"/>
    <property type="project" value="RGD"/>
</dbReference>
<dbReference type="GO" id="GO:0005886">
    <property type="term" value="C:plasma membrane"/>
    <property type="evidence" value="ECO:0000314"/>
    <property type="project" value="BHF-UCL"/>
</dbReference>
<dbReference type="GO" id="GO:0001726">
    <property type="term" value="C:ruffle"/>
    <property type="evidence" value="ECO:0000266"/>
    <property type="project" value="RGD"/>
</dbReference>
<dbReference type="GO" id="GO:1990357">
    <property type="term" value="C:terminal web"/>
    <property type="evidence" value="ECO:0000318"/>
    <property type="project" value="GO_Central"/>
</dbReference>
<dbReference type="GO" id="GO:0003785">
    <property type="term" value="F:actin monomer binding"/>
    <property type="evidence" value="ECO:0000266"/>
    <property type="project" value="RGD"/>
</dbReference>
<dbReference type="GO" id="GO:0030036">
    <property type="term" value="P:actin cytoskeleton organization"/>
    <property type="evidence" value="ECO:0000266"/>
    <property type="project" value="RGD"/>
</dbReference>
<dbReference type="GO" id="GO:0051639">
    <property type="term" value="P:actin filament network formation"/>
    <property type="evidence" value="ECO:0000266"/>
    <property type="project" value="RGD"/>
</dbReference>
<dbReference type="GO" id="GO:0030041">
    <property type="term" value="P:actin filament polymerization"/>
    <property type="evidence" value="ECO:0000266"/>
    <property type="project" value="RGD"/>
</dbReference>
<dbReference type="GO" id="GO:0048669">
    <property type="term" value="P:collateral sprouting in absence of injury"/>
    <property type="evidence" value="ECO:0000266"/>
    <property type="project" value="RGD"/>
</dbReference>
<dbReference type="GO" id="GO:0048565">
    <property type="term" value="P:digestive tract development"/>
    <property type="evidence" value="ECO:0000266"/>
    <property type="project" value="RGD"/>
</dbReference>
<dbReference type="GO" id="GO:0000578">
    <property type="term" value="P:embryonic axis specification"/>
    <property type="evidence" value="ECO:0000266"/>
    <property type="project" value="RGD"/>
</dbReference>
<dbReference type="GO" id="GO:0033504">
    <property type="term" value="P:floor plate development"/>
    <property type="evidence" value="ECO:0000266"/>
    <property type="project" value="RGD"/>
</dbReference>
<dbReference type="GO" id="GO:0001889">
    <property type="term" value="P:liver development"/>
    <property type="evidence" value="ECO:0000266"/>
    <property type="project" value="RGD"/>
</dbReference>
<dbReference type="GO" id="GO:0001843">
    <property type="term" value="P:neural tube closure"/>
    <property type="evidence" value="ECO:0000266"/>
    <property type="project" value="RGD"/>
</dbReference>
<dbReference type="GO" id="GO:0030903">
    <property type="term" value="P:notochord development"/>
    <property type="evidence" value="ECO:0000266"/>
    <property type="project" value="RGD"/>
</dbReference>
<dbReference type="GO" id="GO:1900006">
    <property type="term" value="P:positive regulation of dendrite development"/>
    <property type="evidence" value="ECO:0000266"/>
    <property type="project" value="RGD"/>
</dbReference>
<dbReference type="GO" id="GO:1900029">
    <property type="term" value="P:positive regulation of ruffle assembly"/>
    <property type="evidence" value="ECO:0000266"/>
    <property type="project" value="RGD"/>
</dbReference>
<dbReference type="GO" id="GO:0001757">
    <property type="term" value="P:somite specification"/>
    <property type="evidence" value="ECO:0000266"/>
    <property type="project" value="RGD"/>
</dbReference>
<dbReference type="CDD" id="cd21799">
    <property type="entry name" value="WH2_Wa_Cobl"/>
    <property type="match status" value="1"/>
</dbReference>
<dbReference type="CDD" id="cd21800">
    <property type="entry name" value="WH2_Wb_Cobl"/>
    <property type="match status" value="1"/>
</dbReference>
<dbReference type="CDD" id="cd21801">
    <property type="entry name" value="WH2_Wc_Cobl"/>
    <property type="match status" value="1"/>
</dbReference>
<dbReference type="FunFam" id="3.10.20.90:FF:000065">
    <property type="entry name" value="Cordon-bleu WH2 repeat protein"/>
    <property type="match status" value="1"/>
</dbReference>
<dbReference type="Gene3D" id="3.10.20.90">
    <property type="entry name" value="Phosphatidylinositol 3-kinase Catalytic Subunit, Chain A, domain 1"/>
    <property type="match status" value="1"/>
</dbReference>
<dbReference type="InterPro" id="IPR039895">
    <property type="entry name" value="COBL-like"/>
</dbReference>
<dbReference type="InterPro" id="IPR019025">
    <property type="entry name" value="Cordon-bleu_ubiquitin_domain"/>
</dbReference>
<dbReference type="InterPro" id="IPR003124">
    <property type="entry name" value="WH2_dom"/>
</dbReference>
<dbReference type="PANTHER" id="PTHR47008">
    <property type="entry name" value="PROTEIN CORDON-BLEU"/>
    <property type="match status" value="1"/>
</dbReference>
<dbReference type="PANTHER" id="PTHR47008:SF1">
    <property type="entry name" value="PROTEIN CORDON-BLEU"/>
    <property type="match status" value="1"/>
</dbReference>
<dbReference type="Pfam" id="PF09469">
    <property type="entry name" value="Cobl"/>
    <property type="match status" value="1"/>
</dbReference>
<dbReference type="Pfam" id="PF02205">
    <property type="entry name" value="WH2"/>
    <property type="match status" value="2"/>
</dbReference>
<dbReference type="SMART" id="SM00246">
    <property type="entry name" value="WH2"/>
    <property type="match status" value="3"/>
</dbReference>
<dbReference type="PROSITE" id="PS51082">
    <property type="entry name" value="WH2"/>
    <property type="match status" value="3"/>
</dbReference>
<feature type="chain" id="PRO_0000422092" description="Protein cordon-bleu">
    <location>
        <begin position="1"/>
        <end position="1133"/>
    </location>
</feature>
<feature type="domain" description="WH2 1" evidence="4">
    <location>
        <begin position="981"/>
        <end position="1001"/>
    </location>
</feature>
<feature type="domain" description="WH2 2" evidence="4">
    <location>
        <begin position="1021"/>
        <end position="1041"/>
    </location>
</feature>
<feature type="domain" description="WH2 3" evidence="4">
    <location>
        <begin position="1109"/>
        <end position="1129"/>
    </location>
</feature>
<feature type="region of interest" description="Disordered" evidence="5">
    <location>
        <begin position="1"/>
        <end position="25"/>
    </location>
</feature>
<feature type="region of interest" description="Disordered" evidence="5">
    <location>
        <begin position="246"/>
        <end position="393"/>
    </location>
</feature>
<feature type="region of interest" description="Disordered" evidence="5">
    <location>
        <begin position="442"/>
        <end position="568"/>
    </location>
</feature>
<feature type="region of interest" description="Disordered" evidence="5">
    <location>
        <begin position="664"/>
        <end position="720"/>
    </location>
</feature>
<feature type="region of interest" description="Disordered" evidence="5">
    <location>
        <begin position="942"/>
        <end position="961"/>
    </location>
</feature>
<feature type="region of interest" description="Disordered" evidence="5">
    <location>
        <begin position="990"/>
        <end position="1018"/>
    </location>
</feature>
<feature type="region of interest" description="Disordered" evidence="5">
    <location>
        <begin position="1063"/>
        <end position="1091"/>
    </location>
</feature>
<feature type="short sequence motif" description="KKRRAP 1">
    <location>
        <begin position="307"/>
        <end position="312"/>
    </location>
</feature>
<feature type="short sequence motif" description="KKRRAP 2">
    <location>
        <begin position="340"/>
        <end position="345"/>
    </location>
</feature>
<feature type="compositionally biased region" description="Pro residues" evidence="5">
    <location>
        <begin position="1"/>
        <end position="11"/>
    </location>
</feature>
<feature type="compositionally biased region" description="Polar residues" evidence="5">
    <location>
        <begin position="272"/>
        <end position="301"/>
    </location>
</feature>
<feature type="compositionally biased region" description="Pro residues" evidence="5">
    <location>
        <begin position="345"/>
        <end position="358"/>
    </location>
</feature>
<feature type="compositionally biased region" description="Basic and acidic residues" evidence="5">
    <location>
        <begin position="361"/>
        <end position="371"/>
    </location>
</feature>
<feature type="compositionally biased region" description="Polar residues" evidence="5">
    <location>
        <begin position="382"/>
        <end position="393"/>
    </location>
</feature>
<feature type="compositionally biased region" description="Polar residues" evidence="5">
    <location>
        <begin position="442"/>
        <end position="464"/>
    </location>
</feature>
<feature type="compositionally biased region" description="Basic and acidic residues" evidence="5">
    <location>
        <begin position="512"/>
        <end position="524"/>
    </location>
</feature>
<feature type="compositionally biased region" description="Polar residues" evidence="5">
    <location>
        <begin position="665"/>
        <end position="674"/>
    </location>
</feature>
<feature type="compositionally biased region" description="Polar residues" evidence="5">
    <location>
        <begin position="686"/>
        <end position="696"/>
    </location>
</feature>
<feature type="compositionally biased region" description="Basic and acidic residues" evidence="5">
    <location>
        <begin position="993"/>
        <end position="1010"/>
    </location>
</feature>
<feature type="compositionally biased region" description="Pro residues" evidence="5">
    <location>
        <begin position="1072"/>
        <end position="1083"/>
    </location>
</feature>
<feature type="modified residue" description="Phosphoserine" evidence="8">
    <location>
        <position position="31"/>
    </location>
</feature>
<feature type="modified residue" description="Phosphoserine" evidence="8">
    <location>
        <position position="34"/>
    </location>
</feature>
<feature type="modified residue" description="Phosphoserine" evidence="8">
    <location>
        <position position="196"/>
    </location>
</feature>
<feature type="modified residue" description="Phosphoserine" evidence="8">
    <location>
        <position position="219"/>
    </location>
</feature>
<feature type="modified residue" description="Phosphoserine" evidence="8">
    <location>
        <position position="256"/>
    </location>
</feature>
<feature type="modified residue" description="Phosphoserine" evidence="2">
    <location>
        <position position="278"/>
    </location>
</feature>
<feature type="modified residue" description="Phosphoserine" evidence="8">
    <location>
        <position position="330"/>
    </location>
</feature>
<feature type="modified residue" description="Phosphoserine" evidence="8">
    <location>
        <position position="333"/>
    </location>
</feature>
<feature type="modified residue" description="Phosphoserine" evidence="8">
    <location>
        <position position="356"/>
    </location>
</feature>
<feature type="modified residue" description="Phosphoserine" evidence="2">
    <location>
        <position position="447"/>
    </location>
</feature>
<feature type="modified residue" description="Phosphoserine" evidence="2">
    <location>
        <position position="614"/>
    </location>
</feature>
<feature type="modified residue" description="Phosphoserine" evidence="3">
    <location>
        <position position="924"/>
    </location>
</feature>
<feature type="modified residue" description="Phosphoserine" evidence="2">
    <location>
        <position position="1099"/>
    </location>
</feature>
<sequence length="1133" mass="122267">MKARAPPPPGKPAAQNVHSEQKLPHDATLGSQQSLVHLKEALHNSTLDITVVLPSGLEKQSVVSGSRAVMDLLVELCLQNHLNPSHHVLEIWSSETQQPLSFKPNTLIGSLNAHTVFLKEKVPEEKGKPGLTKAPEKSVRLVVNYLRTQKAVMRVSPEVPLQNILPVICAKCEVSPDHVVLLRDNIAGEELELSKSLNELGIKELYAWDNRREMLRKSSLGNDETDKEKKKFLGFFKVNKRSNSKAEHLGLSGADSDEDPSKSASGGDLNGCVTTPNSPSLHSRSLTLGPSLSLGNISGMSMKSDMKKRRAPPPPSPGLLGQDKVSEKASLSSQADLQKKKRRAPAPPPPQPPPPSPVVPNRKEDKEENRKSTVGMEENYETDTSSLTSSVNGVSNHSLQEAIIPDSGVDDIPVTFIGEVSDEPFDSGLFFSGSNNAAALNQGGIASQRSHLPPYQTEQSQPFIRTNRKEPDPSLPSQDYRKRNQPILANTSENENPVGIDPRVTSFVSKPSTDDPKAKDKDKMCGSGPSEKTQTGHRVNSLPVNPRVGEDENSNSALPPWSHHGQASGGSYGLKYGLTTYKIVPPKPEMRCYDRDVSLSTGAIKIDELGNLMSPHMNGSRTISKPSAVAETEAPPIGKVKEFWRRNSMEKYLNGPAECTVKKAPSTTITATSEKPQRDETKAGFTLTTPEQQPASQEYGAPPEEDRSRPHSAVSCPVKVPAPNPTDITFLKPQRRTSSQYVASAIAKKMGPPKVHADVVRPHKKTAEQGHEEAKLARPPPAWKDSAVPNLCSEAGQCEHGTNQGSVRLPSNPGGQLPADHPKVEVNSTYGKSATHNSPAAVHRNSYFLPGRSSQRDRVSVGQSCGFHEKQTISNQKMNSTSNPSQALDKAHPAPLLLTEARDSGRILVNGSAQTPGNCEPPHSQKESTLTSYIILQTEEKPSPLSADGQNSDDALPSSIFGPKKKFKPVVQRPLPKDISLHSALMEAIHTSGGRDKLRKTAEQASEGRPKKPSYVEAESERSALLAAIRGHSGTLSLRKVSSLASEELQSFRDAALMAPGVDKPQQEDRGLPPPPALPPPSTPASQVPSASIPVSRFSIGTLSNPVNARQALMDAIRSGTGAARLRKVPLLV</sequence>